<reference key="1">
    <citation type="journal article" date="2013" name="Proc. Natl. Acad. Sci. U.S.A.">
        <title>Polynucleobacter necessarius, a model for genome reduction in both free-living and symbiotic bacteria.</title>
        <authorList>
            <person name="Boscaro V."/>
            <person name="Felletti M."/>
            <person name="Vannini C."/>
            <person name="Ackerman M.S."/>
            <person name="Chain P.S."/>
            <person name="Malfatti S."/>
            <person name="Vergez L.M."/>
            <person name="Shin M."/>
            <person name="Doak T.G."/>
            <person name="Lynch M."/>
            <person name="Petroni G."/>
        </authorList>
    </citation>
    <scope>NUCLEOTIDE SEQUENCE [LARGE SCALE GENOMIC DNA]</scope>
    <source>
        <strain>STIR1</strain>
    </source>
</reference>
<evidence type="ECO:0000255" key="1">
    <source>
        <dbReference type="HAMAP-Rule" id="MF_00051"/>
    </source>
</evidence>
<sequence length="414" mass="44963">MFDRQNTLAKTDPQLWEAIQNENKRQEDHIELIASENYTSPAVMAAQGSQLTNKYAEGYPGKRYYGGCEFIDVAEQLAIDRVKALFGAEAANVQPHCGASANQAVFLAFLKPGDTFMGMSLAEGGHLTHGMALNMSGKWFNPIAYGLDKNEEIDYEQMERLAREHKPKLIIAGASAYSKKIDFERIGKLAKEVGAIFMVDMAHYAGLVAAGVYPNPVPHADIVTSTTHKSLRGPRGGIILMKAEHEKAINFAVFPGLQGGPLMHVIAAKAVAFKEAAEPGFKDYQKQVVANAKALAETLIARGLRIVSGGTDSHVMLVDLRAKSMTGKEAERVLGEAHITCNKNGIPNDPEKPMVTSGIRLGSPAMTTRGFKEAEARQVGNFIADVLDNPNDPANIAKVRAQVAELTKRFPVYD</sequence>
<protein>
    <recommendedName>
        <fullName evidence="1">Serine hydroxymethyltransferase</fullName>
        <shortName evidence="1">SHMT</shortName>
        <shortName evidence="1">Serine methylase</shortName>
        <ecNumber evidence="1">2.1.2.1</ecNumber>
    </recommendedName>
</protein>
<name>GLYA_POLNS</name>
<organism>
    <name type="scientific">Polynucleobacter necessarius subsp. necessarius (strain STIR1)</name>
    <dbReference type="NCBI Taxonomy" id="452638"/>
    <lineage>
        <taxon>Bacteria</taxon>
        <taxon>Pseudomonadati</taxon>
        <taxon>Pseudomonadota</taxon>
        <taxon>Betaproteobacteria</taxon>
        <taxon>Burkholderiales</taxon>
        <taxon>Burkholderiaceae</taxon>
        <taxon>Polynucleobacter</taxon>
    </lineage>
</organism>
<gene>
    <name evidence="1" type="primary">glyA</name>
    <name type="ordered locus">Pnec_0307</name>
</gene>
<feature type="chain" id="PRO_1000091566" description="Serine hydroxymethyltransferase">
    <location>
        <begin position="1"/>
        <end position="414"/>
    </location>
</feature>
<feature type="binding site" evidence="1">
    <location>
        <position position="121"/>
    </location>
    <ligand>
        <name>(6S)-5,6,7,8-tetrahydrofolate</name>
        <dbReference type="ChEBI" id="CHEBI:57453"/>
    </ligand>
</feature>
<feature type="binding site" evidence="1">
    <location>
        <begin position="125"/>
        <end position="127"/>
    </location>
    <ligand>
        <name>(6S)-5,6,7,8-tetrahydrofolate</name>
        <dbReference type="ChEBI" id="CHEBI:57453"/>
    </ligand>
</feature>
<feature type="site" description="Plays an important role in substrate specificity" evidence="1">
    <location>
        <position position="228"/>
    </location>
</feature>
<feature type="modified residue" description="N6-(pyridoxal phosphate)lysine" evidence="1">
    <location>
        <position position="229"/>
    </location>
</feature>
<proteinExistence type="inferred from homology"/>
<dbReference type="EC" id="2.1.2.1" evidence="1"/>
<dbReference type="EMBL" id="CP001010">
    <property type="protein sequence ID" value="ACB43600.1"/>
    <property type="molecule type" value="Genomic_DNA"/>
</dbReference>
<dbReference type="SMR" id="B1XTC3"/>
<dbReference type="STRING" id="452638.Pnec_0307"/>
<dbReference type="KEGG" id="pne:Pnec_0307"/>
<dbReference type="eggNOG" id="COG0112">
    <property type="taxonomic scope" value="Bacteria"/>
</dbReference>
<dbReference type="HOGENOM" id="CLU_022477_2_1_4"/>
<dbReference type="OrthoDB" id="9803846at2"/>
<dbReference type="UniPathway" id="UPA00193"/>
<dbReference type="UniPathway" id="UPA00288">
    <property type="reaction ID" value="UER01023"/>
</dbReference>
<dbReference type="GO" id="GO:0005829">
    <property type="term" value="C:cytosol"/>
    <property type="evidence" value="ECO:0007669"/>
    <property type="project" value="TreeGrafter"/>
</dbReference>
<dbReference type="GO" id="GO:0004372">
    <property type="term" value="F:glycine hydroxymethyltransferase activity"/>
    <property type="evidence" value="ECO:0007669"/>
    <property type="project" value="UniProtKB-UniRule"/>
</dbReference>
<dbReference type="GO" id="GO:0030170">
    <property type="term" value="F:pyridoxal phosphate binding"/>
    <property type="evidence" value="ECO:0007669"/>
    <property type="project" value="UniProtKB-UniRule"/>
</dbReference>
<dbReference type="GO" id="GO:0019264">
    <property type="term" value="P:glycine biosynthetic process from serine"/>
    <property type="evidence" value="ECO:0007669"/>
    <property type="project" value="UniProtKB-UniRule"/>
</dbReference>
<dbReference type="GO" id="GO:0035999">
    <property type="term" value="P:tetrahydrofolate interconversion"/>
    <property type="evidence" value="ECO:0007669"/>
    <property type="project" value="UniProtKB-UniRule"/>
</dbReference>
<dbReference type="CDD" id="cd00378">
    <property type="entry name" value="SHMT"/>
    <property type="match status" value="1"/>
</dbReference>
<dbReference type="FunFam" id="3.40.640.10:FF:000001">
    <property type="entry name" value="Serine hydroxymethyltransferase"/>
    <property type="match status" value="1"/>
</dbReference>
<dbReference type="FunFam" id="3.90.1150.10:FF:000003">
    <property type="entry name" value="Serine hydroxymethyltransferase"/>
    <property type="match status" value="1"/>
</dbReference>
<dbReference type="Gene3D" id="3.90.1150.10">
    <property type="entry name" value="Aspartate Aminotransferase, domain 1"/>
    <property type="match status" value="1"/>
</dbReference>
<dbReference type="Gene3D" id="3.40.640.10">
    <property type="entry name" value="Type I PLP-dependent aspartate aminotransferase-like (Major domain)"/>
    <property type="match status" value="1"/>
</dbReference>
<dbReference type="HAMAP" id="MF_00051">
    <property type="entry name" value="SHMT"/>
    <property type="match status" value="1"/>
</dbReference>
<dbReference type="InterPro" id="IPR015424">
    <property type="entry name" value="PyrdxlP-dep_Trfase"/>
</dbReference>
<dbReference type="InterPro" id="IPR015421">
    <property type="entry name" value="PyrdxlP-dep_Trfase_major"/>
</dbReference>
<dbReference type="InterPro" id="IPR015422">
    <property type="entry name" value="PyrdxlP-dep_Trfase_small"/>
</dbReference>
<dbReference type="InterPro" id="IPR001085">
    <property type="entry name" value="Ser_HO-MeTrfase"/>
</dbReference>
<dbReference type="InterPro" id="IPR049943">
    <property type="entry name" value="Ser_HO-MeTrfase-like"/>
</dbReference>
<dbReference type="InterPro" id="IPR019798">
    <property type="entry name" value="Ser_HO-MeTrfase_PLP_BS"/>
</dbReference>
<dbReference type="InterPro" id="IPR039429">
    <property type="entry name" value="SHMT-like_dom"/>
</dbReference>
<dbReference type="NCBIfam" id="NF000586">
    <property type="entry name" value="PRK00011.1"/>
    <property type="match status" value="1"/>
</dbReference>
<dbReference type="PANTHER" id="PTHR11680">
    <property type="entry name" value="SERINE HYDROXYMETHYLTRANSFERASE"/>
    <property type="match status" value="1"/>
</dbReference>
<dbReference type="PANTHER" id="PTHR11680:SF35">
    <property type="entry name" value="SERINE HYDROXYMETHYLTRANSFERASE 1"/>
    <property type="match status" value="1"/>
</dbReference>
<dbReference type="Pfam" id="PF00464">
    <property type="entry name" value="SHMT"/>
    <property type="match status" value="1"/>
</dbReference>
<dbReference type="PIRSF" id="PIRSF000412">
    <property type="entry name" value="SHMT"/>
    <property type="match status" value="1"/>
</dbReference>
<dbReference type="SUPFAM" id="SSF53383">
    <property type="entry name" value="PLP-dependent transferases"/>
    <property type="match status" value="1"/>
</dbReference>
<dbReference type="PROSITE" id="PS00096">
    <property type="entry name" value="SHMT"/>
    <property type="match status" value="1"/>
</dbReference>
<keyword id="KW-0028">Amino-acid biosynthesis</keyword>
<keyword id="KW-0963">Cytoplasm</keyword>
<keyword id="KW-0554">One-carbon metabolism</keyword>
<keyword id="KW-0663">Pyridoxal phosphate</keyword>
<keyword id="KW-0808">Transferase</keyword>
<comment type="function">
    <text evidence="1">Catalyzes the reversible interconversion of serine and glycine with tetrahydrofolate (THF) serving as the one-carbon carrier. This reaction serves as the major source of one-carbon groups required for the biosynthesis of purines, thymidylate, methionine, and other important biomolecules. Also exhibits THF-independent aldolase activity toward beta-hydroxyamino acids, producing glycine and aldehydes, via a retro-aldol mechanism.</text>
</comment>
<comment type="catalytic activity">
    <reaction evidence="1">
        <text>(6R)-5,10-methylene-5,6,7,8-tetrahydrofolate + glycine + H2O = (6S)-5,6,7,8-tetrahydrofolate + L-serine</text>
        <dbReference type="Rhea" id="RHEA:15481"/>
        <dbReference type="ChEBI" id="CHEBI:15377"/>
        <dbReference type="ChEBI" id="CHEBI:15636"/>
        <dbReference type="ChEBI" id="CHEBI:33384"/>
        <dbReference type="ChEBI" id="CHEBI:57305"/>
        <dbReference type="ChEBI" id="CHEBI:57453"/>
        <dbReference type="EC" id="2.1.2.1"/>
    </reaction>
</comment>
<comment type="cofactor">
    <cofactor evidence="1">
        <name>pyridoxal 5'-phosphate</name>
        <dbReference type="ChEBI" id="CHEBI:597326"/>
    </cofactor>
</comment>
<comment type="pathway">
    <text evidence="1">One-carbon metabolism; tetrahydrofolate interconversion.</text>
</comment>
<comment type="pathway">
    <text evidence="1">Amino-acid biosynthesis; glycine biosynthesis; glycine from L-serine: step 1/1.</text>
</comment>
<comment type="subunit">
    <text evidence="1">Homodimer.</text>
</comment>
<comment type="subcellular location">
    <subcellularLocation>
        <location evidence="1">Cytoplasm</location>
    </subcellularLocation>
</comment>
<comment type="similarity">
    <text evidence="1">Belongs to the SHMT family.</text>
</comment>
<accession>B1XTC3</accession>